<dbReference type="EMBL" id="AF069441">
    <property type="protein sequence ID" value="AAD36948.1"/>
    <property type="status" value="ALT_SEQ"/>
    <property type="molecule type" value="Genomic_DNA"/>
</dbReference>
<dbReference type="EMBL" id="AL161500">
    <property type="protein sequence ID" value="CAB77901.1"/>
    <property type="status" value="ALT_SEQ"/>
    <property type="molecule type" value="Genomic_DNA"/>
</dbReference>
<dbReference type="EMBL" id="CP002687">
    <property type="protein sequence ID" value="AEE82379.1"/>
    <property type="molecule type" value="Genomic_DNA"/>
</dbReference>
<dbReference type="EMBL" id="AY045782">
    <property type="protein sequence ID" value="AAK76456.1"/>
    <property type="molecule type" value="mRNA"/>
</dbReference>
<dbReference type="EMBL" id="AY142573">
    <property type="protein sequence ID" value="AAN13142.1"/>
    <property type="molecule type" value="mRNA"/>
</dbReference>
<dbReference type="PIR" id="G85054">
    <property type="entry name" value="G85054"/>
</dbReference>
<dbReference type="RefSeq" id="NP_567263.1">
    <property type="nucleotide sequence ID" value="NM_116671.3"/>
</dbReference>
<dbReference type="PDB" id="4GR2">
    <property type="method" value="X-ray"/>
    <property type="resolution" value="2.00 A"/>
    <property type="chains" value="A/B=47-174"/>
</dbReference>
<dbReference type="PDBsum" id="4GR2"/>
<dbReference type="SMR" id="Q94AU9"/>
<dbReference type="FunCoup" id="Q94AU9">
    <property type="interactions" value="634"/>
</dbReference>
<dbReference type="IntAct" id="Q94AU9">
    <property type="interactions" value="2"/>
</dbReference>
<dbReference type="STRING" id="3702.Q94AU9"/>
<dbReference type="iPTMnet" id="Q94AU9"/>
<dbReference type="PaxDb" id="3702-AT4G04330.1"/>
<dbReference type="ProteomicsDB" id="236568"/>
<dbReference type="EnsemblPlants" id="AT4G04330.1">
    <property type="protein sequence ID" value="AT4G04330.1"/>
    <property type="gene ID" value="AT4G04330"/>
</dbReference>
<dbReference type="GeneID" id="825753"/>
<dbReference type="Gramene" id="AT4G04330.1">
    <property type="protein sequence ID" value="AT4G04330.1"/>
    <property type="gene ID" value="AT4G04330"/>
</dbReference>
<dbReference type="KEGG" id="ath:AT4G04330"/>
<dbReference type="Araport" id="AT4G04330"/>
<dbReference type="TAIR" id="AT4G04330">
    <property type="gene designation" value="RBCX1"/>
</dbReference>
<dbReference type="eggNOG" id="ENOG502RZSC">
    <property type="taxonomic scope" value="Eukaryota"/>
</dbReference>
<dbReference type="HOGENOM" id="CLU_125191_0_0_1"/>
<dbReference type="InParanoid" id="Q94AU9"/>
<dbReference type="OMA" id="KFCANLM"/>
<dbReference type="OrthoDB" id="513226at2759"/>
<dbReference type="PhylomeDB" id="Q94AU9"/>
<dbReference type="EvolutionaryTrace" id="Q94AU9"/>
<dbReference type="PRO" id="PR:Q94AU9"/>
<dbReference type="Proteomes" id="UP000006548">
    <property type="component" value="Chromosome 4"/>
</dbReference>
<dbReference type="ExpressionAtlas" id="Q94AU9">
    <property type="expression patterns" value="baseline and differential"/>
</dbReference>
<dbReference type="GO" id="GO:0009534">
    <property type="term" value="C:chloroplast thylakoid"/>
    <property type="evidence" value="ECO:0000314"/>
    <property type="project" value="TAIR"/>
</dbReference>
<dbReference type="GO" id="GO:0044183">
    <property type="term" value="F:protein folding chaperone"/>
    <property type="evidence" value="ECO:0000314"/>
    <property type="project" value="TAIR"/>
</dbReference>
<dbReference type="GO" id="GO:0015977">
    <property type="term" value="P:carbon fixation"/>
    <property type="evidence" value="ECO:0007669"/>
    <property type="project" value="UniProtKB-KW"/>
</dbReference>
<dbReference type="GO" id="GO:0061077">
    <property type="term" value="P:chaperone-mediated protein folding"/>
    <property type="evidence" value="ECO:0000314"/>
    <property type="project" value="TAIR"/>
</dbReference>
<dbReference type="GO" id="GO:0015979">
    <property type="term" value="P:photosynthesis"/>
    <property type="evidence" value="ECO:0007669"/>
    <property type="project" value="UniProtKB-KW"/>
</dbReference>
<dbReference type="GO" id="GO:0009409">
    <property type="term" value="P:response to cold"/>
    <property type="evidence" value="ECO:0000270"/>
    <property type="project" value="TAIR"/>
</dbReference>
<dbReference type="GO" id="GO:0009651">
    <property type="term" value="P:response to salt stress"/>
    <property type="evidence" value="ECO:0000270"/>
    <property type="project" value="TAIR"/>
</dbReference>
<dbReference type="GO" id="GO:0009414">
    <property type="term" value="P:response to water deprivation"/>
    <property type="evidence" value="ECO:0000270"/>
    <property type="project" value="TAIR"/>
</dbReference>
<dbReference type="GO" id="GO:0110102">
    <property type="term" value="P:ribulose bisphosphate carboxylase complex assembly"/>
    <property type="evidence" value="ECO:0007669"/>
    <property type="project" value="InterPro"/>
</dbReference>
<dbReference type="FunFam" id="1.10.1200.210:FF:000001">
    <property type="entry name" value="Chaperonin-like RBCX protein 1, chloroplastic"/>
    <property type="match status" value="1"/>
</dbReference>
<dbReference type="Gene3D" id="1.10.1200.210">
    <property type="entry name" value="Chaperonin-like RbcX"/>
    <property type="match status" value="1"/>
</dbReference>
<dbReference type="InterPro" id="IPR038052">
    <property type="entry name" value="Chaperonin_RbcX_sf"/>
</dbReference>
<dbReference type="InterPro" id="IPR003435">
    <property type="entry name" value="Chaperonin_RcbX"/>
</dbReference>
<dbReference type="PANTHER" id="PTHR33791">
    <property type="entry name" value="CHAPERONIN-LIKE RBCX PROTEIN 1, CHLOROPLASTIC"/>
    <property type="match status" value="1"/>
</dbReference>
<dbReference type="PANTHER" id="PTHR33791:SF12">
    <property type="entry name" value="CHAPERONIN-LIKE RBCX PROTEIN 1, CHLOROPLASTIC"/>
    <property type="match status" value="1"/>
</dbReference>
<dbReference type="Pfam" id="PF02341">
    <property type="entry name" value="RbcX"/>
    <property type="match status" value="1"/>
</dbReference>
<dbReference type="SUPFAM" id="SSF158615">
    <property type="entry name" value="RbcX-like"/>
    <property type="match status" value="1"/>
</dbReference>
<protein>
    <recommendedName>
        <fullName evidence="3">Chaperonin-like RBCX protein 1, chloroplastic</fullName>
        <shortName evidence="3">AtRBCX1</shortName>
    </recommendedName>
</protein>
<keyword id="KW-0002">3D-structure</keyword>
<keyword id="KW-0120">Carbon dioxide fixation</keyword>
<keyword id="KW-0143">Chaperone</keyword>
<keyword id="KW-0150">Chloroplast</keyword>
<keyword id="KW-0903">Direct protein sequencing</keyword>
<keyword id="KW-0602">Photosynthesis</keyword>
<keyword id="KW-0934">Plastid</keyword>
<keyword id="KW-1185">Reference proteome</keyword>
<keyword id="KW-0809">Transit peptide</keyword>
<sequence>MESSSSLLHHSYLSYLNPKFGKRPLVSYPLMQSSRKCKQTRICSNKMYVPGFGEASPEAKAAKHLHDFFTYVAVRIVSAQLESYNPEAYMELREFLDTNSVSDGDKFCATLMRRSSRHMNLALRILEVRSAYCKNDFEWDNMKRLAFKNVDDSNTRLMREYVLETSHVETDSDK</sequence>
<organism evidence="7">
    <name type="scientific">Arabidopsis thaliana</name>
    <name type="common">Mouse-ear cress</name>
    <dbReference type="NCBI Taxonomy" id="3702"/>
    <lineage>
        <taxon>Eukaryota</taxon>
        <taxon>Viridiplantae</taxon>
        <taxon>Streptophyta</taxon>
        <taxon>Embryophyta</taxon>
        <taxon>Tracheophyta</taxon>
        <taxon>Spermatophyta</taxon>
        <taxon>Magnoliopsida</taxon>
        <taxon>eudicotyledons</taxon>
        <taxon>Gunneridae</taxon>
        <taxon>Pentapetalae</taxon>
        <taxon>rosids</taxon>
        <taxon>malvids</taxon>
        <taxon>Brassicales</taxon>
        <taxon>Brassicaceae</taxon>
        <taxon>Camelineae</taxon>
        <taxon>Arabidopsis</taxon>
    </lineage>
</organism>
<accession>Q94AU9</accession>
<accession>Q9XEA2</accession>
<feature type="transit peptide" description="Chloroplast" evidence="1">
    <location>
        <begin position="1"/>
        <end position="45"/>
    </location>
</feature>
<feature type="chain" id="PRO_0000437958" description="Chaperonin-like RBCX protein 1, chloroplastic">
    <location>
        <begin position="46"/>
        <end position="174"/>
    </location>
</feature>
<feature type="mutagenesis site" description="No effect on rbcL binding; when associated with A-133." evidence="2">
    <original>C</original>
    <variation>L</variation>
    <location>
        <position position="108"/>
    </location>
</feature>
<feature type="mutagenesis site" description="No effect on rbcL binding; when associated with L-108." evidence="2">
    <original>C</original>
    <variation>A</variation>
    <location>
        <position position="133"/>
    </location>
</feature>
<feature type="helix" evidence="9">
    <location>
        <begin position="57"/>
        <end position="84"/>
    </location>
</feature>
<feature type="helix" evidence="9">
    <location>
        <begin position="86"/>
        <end position="98"/>
    </location>
</feature>
<feature type="helix" evidence="9">
    <location>
        <begin position="101"/>
        <end position="103"/>
    </location>
</feature>
<feature type="helix" evidence="9">
    <location>
        <begin position="105"/>
        <end position="114"/>
    </location>
</feature>
<feature type="helix" evidence="9">
    <location>
        <begin position="116"/>
        <end position="135"/>
    </location>
</feature>
<feature type="helix" evidence="9">
    <location>
        <begin position="139"/>
        <end position="162"/>
    </location>
</feature>
<proteinExistence type="evidence at protein level"/>
<comment type="function">
    <text evidence="1">Chaperone involved in RuBisCO assembly process.</text>
</comment>
<comment type="subunit">
    <text evidence="1 2">Homodimer (PubMed:23295968). Interacts with rbcL, atpB and THI1 (PubMed:21922322).</text>
</comment>
<comment type="subcellular location">
    <subcellularLocation>
        <location evidence="1">Plastid</location>
        <location evidence="1">Chloroplast</location>
    </subcellularLocation>
    <text evidence="1">Associated with the thylakoid membranes.</text>
</comment>
<comment type="induction">
    <text evidence="1">Up-regulated by salt and desiccation.</text>
</comment>
<comment type="similarity">
    <text evidence="4">Belongs to the RbcX family.</text>
</comment>
<comment type="sequence caution" evidence="4">
    <conflict type="erroneous gene model prediction">
        <sequence resource="EMBL-CDS" id="AAD36948"/>
    </conflict>
</comment>
<comment type="sequence caution" evidence="4">
    <conflict type="erroneous gene model prediction">
        <sequence resource="EMBL-CDS" id="CAB77901"/>
    </conflict>
</comment>
<gene>
    <name evidence="3" type="primary">RBCX1</name>
    <name evidence="5" type="ordered locus">At4g04330</name>
    <name evidence="6" type="ORF">T19B17.5</name>
</gene>
<evidence type="ECO:0000269" key="1">
    <source>
    </source>
</evidence>
<evidence type="ECO:0000269" key="2">
    <source>
    </source>
</evidence>
<evidence type="ECO:0000303" key="3">
    <source>
    </source>
</evidence>
<evidence type="ECO:0000305" key="4"/>
<evidence type="ECO:0000312" key="5">
    <source>
        <dbReference type="Araport" id="AT4G04330"/>
    </source>
</evidence>
<evidence type="ECO:0000312" key="6">
    <source>
        <dbReference type="EMBL" id="AAD36948.1"/>
    </source>
</evidence>
<evidence type="ECO:0000312" key="7">
    <source>
        <dbReference type="EMBL" id="AAK76456.1"/>
    </source>
</evidence>
<evidence type="ECO:0007744" key="8">
    <source>
        <dbReference type="PDB" id="4GR2"/>
    </source>
</evidence>
<evidence type="ECO:0007829" key="9">
    <source>
        <dbReference type="PDB" id="4GR2"/>
    </source>
</evidence>
<reference key="1">
    <citation type="journal article" date="1999" name="Nature">
        <title>Sequence and analysis of chromosome 4 of the plant Arabidopsis thaliana.</title>
        <authorList>
            <person name="Mayer K.F.X."/>
            <person name="Schueller C."/>
            <person name="Wambutt R."/>
            <person name="Murphy G."/>
            <person name="Volckaert G."/>
            <person name="Pohl T."/>
            <person name="Duesterhoeft A."/>
            <person name="Stiekema W."/>
            <person name="Entian K.-D."/>
            <person name="Terryn N."/>
            <person name="Harris B."/>
            <person name="Ansorge W."/>
            <person name="Brandt P."/>
            <person name="Grivell L.A."/>
            <person name="Rieger M."/>
            <person name="Weichselgartner M."/>
            <person name="de Simone V."/>
            <person name="Obermaier B."/>
            <person name="Mache R."/>
            <person name="Mueller M."/>
            <person name="Kreis M."/>
            <person name="Delseny M."/>
            <person name="Puigdomenech P."/>
            <person name="Watson M."/>
            <person name="Schmidtheini T."/>
            <person name="Reichert B."/>
            <person name="Portetelle D."/>
            <person name="Perez-Alonso M."/>
            <person name="Boutry M."/>
            <person name="Bancroft I."/>
            <person name="Vos P."/>
            <person name="Hoheisel J."/>
            <person name="Zimmermann W."/>
            <person name="Wedler H."/>
            <person name="Ridley P."/>
            <person name="Langham S.-A."/>
            <person name="McCullagh B."/>
            <person name="Bilham L."/>
            <person name="Robben J."/>
            <person name="van der Schueren J."/>
            <person name="Grymonprez B."/>
            <person name="Chuang Y.-J."/>
            <person name="Vandenbussche F."/>
            <person name="Braeken M."/>
            <person name="Weltjens I."/>
            <person name="Voet M."/>
            <person name="Bastiaens I."/>
            <person name="Aert R."/>
            <person name="Defoor E."/>
            <person name="Weitzenegger T."/>
            <person name="Bothe G."/>
            <person name="Ramsperger U."/>
            <person name="Hilbert H."/>
            <person name="Braun M."/>
            <person name="Holzer E."/>
            <person name="Brandt A."/>
            <person name="Peters S."/>
            <person name="van Staveren M."/>
            <person name="Dirkse W."/>
            <person name="Mooijman P."/>
            <person name="Klein Lankhorst R."/>
            <person name="Rose M."/>
            <person name="Hauf J."/>
            <person name="Koetter P."/>
            <person name="Berneiser S."/>
            <person name="Hempel S."/>
            <person name="Feldpausch M."/>
            <person name="Lamberth S."/>
            <person name="Van den Daele H."/>
            <person name="De Keyser A."/>
            <person name="Buysshaert C."/>
            <person name="Gielen J."/>
            <person name="Villarroel R."/>
            <person name="De Clercq R."/>
            <person name="van Montagu M."/>
            <person name="Rogers J."/>
            <person name="Cronin A."/>
            <person name="Quail M.A."/>
            <person name="Bray-Allen S."/>
            <person name="Clark L."/>
            <person name="Doggett J."/>
            <person name="Hall S."/>
            <person name="Kay M."/>
            <person name="Lennard N."/>
            <person name="McLay K."/>
            <person name="Mayes R."/>
            <person name="Pettett A."/>
            <person name="Rajandream M.A."/>
            <person name="Lyne M."/>
            <person name="Benes V."/>
            <person name="Rechmann S."/>
            <person name="Borkova D."/>
            <person name="Bloecker H."/>
            <person name="Scharfe M."/>
            <person name="Grimm M."/>
            <person name="Loehnert T.-H."/>
            <person name="Dose S."/>
            <person name="de Haan M."/>
            <person name="Maarse A.C."/>
            <person name="Schaefer M."/>
            <person name="Mueller-Auer S."/>
            <person name="Gabel C."/>
            <person name="Fuchs M."/>
            <person name="Fartmann B."/>
            <person name="Granderath K."/>
            <person name="Dauner D."/>
            <person name="Herzl A."/>
            <person name="Neumann S."/>
            <person name="Argiriou A."/>
            <person name="Vitale D."/>
            <person name="Liguori R."/>
            <person name="Piravandi E."/>
            <person name="Massenet O."/>
            <person name="Quigley F."/>
            <person name="Clabauld G."/>
            <person name="Muendlein A."/>
            <person name="Felber R."/>
            <person name="Schnabl S."/>
            <person name="Hiller R."/>
            <person name="Schmidt W."/>
            <person name="Lecharny A."/>
            <person name="Aubourg S."/>
            <person name="Chefdor F."/>
            <person name="Cooke R."/>
            <person name="Berger C."/>
            <person name="Monfort A."/>
            <person name="Casacuberta E."/>
            <person name="Gibbons T."/>
            <person name="Weber N."/>
            <person name="Vandenbol M."/>
            <person name="Bargues M."/>
            <person name="Terol J."/>
            <person name="Torres A."/>
            <person name="Perez-Perez A."/>
            <person name="Purnelle B."/>
            <person name="Bent E."/>
            <person name="Johnson S."/>
            <person name="Tacon D."/>
            <person name="Jesse T."/>
            <person name="Heijnen L."/>
            <person name="Schwarz S."/>
            <person name="Scholler P."/>
            <person name="Heber S."/>
            <person name="Francs P."/>
            <person name="Bielke C."/>
            <person name="Frishman D."/>
            <person name="Haase D."/>
            <person name="Lemcke K."/>
            <person name="Mewes H.-W."/>
            <person name="Stocker S."/>
            <person name="Zaccaria P."/>
            <person name="Bevan M."/>
            <person name="Wilson R.K."/>
            <person name="de la Bastide M."/>
            <person name="Habermann K."/>
            <person name="Parnell L."/>
            <person name="Dedhia N."/>
            <person name="Gnoj L."/>
            <person name="Schutz K."/>
            <person name="Huang E."/>
            <person name="Spiegel L."/>
            <person name="Sekhon M."/>
            <person name="Murray J."/>
            <person name="Sheet P."/>
            <person name="Cordes M."/>
            <person name="Abu-Threideh J."/>
            <person name="Stoneking T."/>
            <person name="Kalicki J."/>
            <person name="Graves T."/>
            <person name="Harmon G."/>
            <person name="Edwards J."/>
            <person name="Latreille P."/>
            <person name="Courtney L."/>
            <person name="Cloud J."/>
            <person name="Abbott A."/>
            <person name="Scott K."/>
            <person name="Johnson D."/>
            <person name="Minx P."/>
            <person name="Bentley D."/>
            <person name="Fulton B."/>
            <person name="Miller N."/>
            <person name="Greco T."/>
            <person name="Kemp K."/>
            <person name="Kramer J."/>
            <person name="Fulton L."/>
            <person name="Mardis E."/>
            <person name="Dante M."/>
            <person name="Pepin K."/>
            <person name="Hillier L.W."/>
            <person name="Nelson J."/>
            <person name="Spieth J."/>
            <person name="Ryan E."/>
            <person name="Andrews S."/>
            <person name="Geisel C."/>
            <person name="Layman D."/>
            <person name="Du H."/>
            <person name="Ali J."/>
            <person name="Berghoff A."/>
            <person name="Jones K."/>
            <person name="Drone K."/>
            <person name="Cotton M."/>
            <person name="Joshu C."/>
            <person name="Antonoiu B."/>
            <person name="Zidanic M."/>
            <person name="Strong C."/>
            <person name="Sun H."/>
            <person name="Lamar B."/>
            <person name="Yordan C."/>
            <person name="Ma P."/>
            <person name="Zhong J."/>
            <person name="Preston R."/>
            <person name="Vil D."/>
            <person name="Shekher M."/>
            <person name="Matero A."/>
            <person name="Shah R."/>
            <person name="Swaby I.K."/>
            <person name="O'Shaughnessy A."/>
            <person name="Rodriguez M."/>
            <person name="Hoffman J."/>
            <person name="Till S."/>
            <person name="Granat S."/>
            <person name="Shohdy N."/>
            <person name="Hasegawa A."/>
            <person name="Hameed A."/>
            <person name="Lodhi M."/>
            <person name="Johnson A."/>
            <person name="Chen E."/>
            <person name="Marra M.A."/>
            <person name="Martienssen R."/>
            <person name="McCombie W.R."/>
        </authorList>
    </citation>
    <scope>NUCLEOTIDE SEQUENCE [LARGE SCALE GENOMIC DNA]</scope>
    <source>
        <strain>cv. Columbia</strain>
    </source>
</reference>
<reference key="2">
    <citation type="journal article" date="2017" name="Plant J.">
        <title>Araport11: a complete reannotation of the Arabidopsis thaliana reference genome.</title>
        <authorList>
            <person name="Cheng C.Y."/>
            <person name="Krishnakumar V."/>
            <person name="Chan A.P."/>
            <person name="Thibaud-Nissen F."/>
            <person name="Schobel S."/>
            <person name="Town C.D."/>
        </authorList>
    </citation>
    <scope>GENOME REANNOTATION</scope>
    <source>
        <strain>cv. Columbia</strain>
    </source>
</reference>
<reference key="3">
    <citation type="journal article" date="2003" name="Science">
        <title>Empirical analysis of transcriptional activity in the Arabidopsis genome.</title>
        <authorList>
            <person name="Yamada K."/>
            <person name="Lim J."/>
            <person name="Dale J.M."/>
            <person name="Chen H."/>
            <person name="Shinn P."/>
            <person name="Palm C.J."/>
            <person name="Southwick A.M."/>
            <person name="Wu H.C."/>
            <person name="Kim C.J."/>
            <person name="Nguyen M."/>
            <person name="Pham P.K."/>
            <person name="Cheuk R.F."/>
            <person name="Karlin-Newmann G."/>
            <person name="Liu S.X."/>
            <person name="Lam B."/>
            <person name="Sakano H."/>
            <person name="Wu T."/>
            <person name="Yu G."/>
            <person name="Miranda M."/>
            <person name="Quach H.L."/>
            <person name="Tripp M."/>
            <person name="Chang C.H."/>
            <person name="Lee J.M."/>
            <person name="Toriumi M.J."/>
            <person name="Chan M.M."/>
            <person name="Tang C.C."/>
            <person name="Onodera C.S."/>
            <person name="Deng J.M."/>
            <person name="Akiyama K."/>
            <person name="Ansari Y."/>
            <person name="Arakawa T."/>
            <person name="Banh J."/>
            <person name="Banno F."/>
            <person name="Bowser L."/>
            <person name="Brooks S.Y."/>
            <person name="Carninci P."/>
            <person name="Chao Q."/>
            <person name="Choy N."/>
            <person name="Enju A."/>
            <person name="Goldsmith A.D."/>
            <person name="Gurjal M."/>
            <person name="Hansen N.F."/>
            <person name="Hayashizaki Y."/>
            <person name="Johnson-Hopson C."/>
            <person name="Hsuan V.W."/>
            <person name="Iida K."/>
            <person name="Karnes M."/>
            <person name="Khan S."/>
            <person name="Koesema E."/>
            <person name="Ishida J."/>
            <person name="Jiang P.X."/>
            <person name="Jones T."/>
            <person name="Kawai J."/>
            <person name="Kamiya A."/>
            <person name="Meyers C."/>
            <person name="Nakajima M."/>
            <person name="Narusaka M."/>
            <person name="Seki M."/>
            <person name="Sakurai T."/>
            <person name="Satou M."/>
            <person name="Tamse R."/>
            <person name="Vaysberg M."/>
            <person name="Wallender E.K."/>
            <person name="Wong C."/>
            <person name="Yamamura Y."/>
            <person name="Yuan S."/>
            <person name="Shinozaki K."/>
            <person name="Davis R.W."/>
            <person name="Theologis A."/>
            <person name="Ecker J.R."/>
        </authorList>
    </citation>
    <scope>NUCLEOTIDE SEQUENCE [LARGE SCALE MRNA]</scope>
    <source>
        <strain>cv. Columbia</strain>
    </source>
</reference>
<reference key="4">
    <citation type="journal article" date="2011" name="Plant Mol. Biol.">
        <title>Initial characteristics of RbcX proteins from Arabidopsis thaliana.</title>
        <authorList>
            <person name="Kolesinski P."/>
            <person name="Piechota J."/>
            <person name="Szczepaniak A."/>
        </authorList>
    </citation>
    <scope>FUNCTION</scope>
    <scope>SUBCELLULAR LOCATION</scope>
    <scope>PROTEIN SEQUENCE OF 46-50</scope>
    <scope>INTERACTION WITH RBCL; THI1 AND ATPB</scope>
    <scope>INDUCTION BY DESICCATION AND SALT</scope>
</reference>
<reference evidence="8" key="5">
    <citation type="journal article" date="2013" name="Biochim. Biophys. Acta">
        <title>Insights into eukaryotic Rubisco assembly - crystal structures of RbcX chaperones from Arabidopsis thaliana.</title>
        <authorList>
            <person name="Kolesinski P."/>
            <person name="Golik P."/>
            <person name="Grudnik P."/>
            <person name="Piechota J."/>
            <person name="Markiewicz M."/>
            <person name="Tarnawski M."/>
            <person name="Dubin G."/>
            <person name="Szczepaniak A."/>
        </authorList>
    </citation>
    <scope>X-RAY CRYSTALLOGRAPHY (2.00 ANGSTROMS) OF 47-174</scope>
    <scope>SUBUNIT</scope>
    <scope>MUTAGENESIS OF CYS-108 AND CYS-133</scope>
</reference>
<name>RBCX1_ARATH</name>